<keyword id="KW-0227">DNA damage</keyword>
<keyword id="KW-0234">DNA repair</keyword>
<keyword id="KW-0235">DNA replication</keyword>
<keyword id="KW-0436">Ligase</keyword>
<keyword id="KW-0460">Magnesium</keyword>
<keyword id="KW-0464">Manganese</keyword>
<keyword id="KW-0479">Metal-binding</keyword>
<keyword id="KW-0520">NAD</keyword>
<keyword id="KW-0862">Zinc</keyword>
<evidence type="ECO:0000255" key="1">
    <source>
        <dbReference type="HAMAP-Rule" id="MF_01588"/>
    </source>
</evidence>
<dbReference type="EC" id="6.5.1.2" evidence="1"/>
<dbReference type="EMBL" id="CP000083">
    <property type="protein sequence ID" value="AAZ27221.1"/>
    <property type="molecule type" value="Genomic_DNA"/>
</dbReference>
<dbReference type="RefSeq" id="WP_011044226.1">
    <property type="nucleotide sequence ID" value="NC_003910.7"/>
</dbReference>
<dbReference type="SMR" id="Q47YI0"/>
<dbReference type="STRING" id="167879.CPS_3466"/>
<dbReference type="KEGG" id="cps:CPS_3466"/>
<dbReference type="eggNOG" id="COG0272">
    <property type="taxonomic scope" value="Bacteria"/>
</dbReference>
<dbReference type="HOGENOM" id="CLU_007764_2_1_6"/>
<dbReference type="Proteomes" id="UP000000547">
    <property type="component" value="Chromosome"/>
</dbReference>
<dbReference type="GO" id="GO:0005829">
    <property type="term" value="C:cytosol"/>
    <property type="evidence" value="ECO:0007669"/>
    <property type="project" value="TreeGrafter"/>
</dbReference>
<dbReference type="GO" id="GO:0003677">
    <property type="term" value="F:DNA binding"/>
    <property type="evidence" value="ECO:0007669"/>
    <property type="project" value="InterPro"/>
</dbReference>
<dbReference type="GO" id="GO:0003911">
    <property type="term" value="F:DNA ligase (NAD+) activity"/>
    <property type="evidence" value="ECO:0007669"/>
    <property type="project" value="UniProtKB-UniRule"/>
</dbReference>
<dbReference type="GO" id="GO:0046872">
    <property type="term" value="F:metal ion binding"/>
    <property type="evidence" value="ECO:0007669"/>
    <property type="project" value="UniProtKB-KW"/>
</dbReference>
<dbReference type="GO" id="GO:0006281">
    <property type="term" value="P:DNA repair"/>
    <property type="evidence" value="ECO:0007669"/>
    <property type="project" value="UniProtKB-KW"/>
</dbReference>
<dbReference type="GO" id="GO:0006260">
    <property type="term" value="P:DNA replication"/>
    <property type="evidence" value="ECO:0007669"/>
    <property type="project" value="UniProtKB-KW"/>
</dbReference>
<dbReference type="CDD" id="cd17748">
    <property type="entry name" value="BRCT_DNA_ligase_like"/>
    <property type="match status" value="1"/>
</dbReference>
<dbReference type="CDD" id="cd00114">
    <property type="entry name" value="LIGANc"/>
    <property type="match status" value="1"/>
</dbReference>
<dbReference type="FunFam" id="1.10.150.20:FF:000006">
    <property type="entry name" value="DNA ligase"/>
    <property type="match status" value="1"/>
</dbReference>
<dbReference type="FunFam" id="1.10.150.20:FF:000007">
    <property type="entry name" value="DNA ligase"/>
    <property type="match status" value="1"/>
</dbReference>
<dbReference type="FunFam" id="1.10.287.610:FF:000002">
    <property type="entry name" value="DNA ligase"/>
    <property type="match status" value="1"/>
</dbReference>
<dbReference type="FunFam" id="2.40.50.140:FF:000012">
    <property type="entry name" value="DNA ligase"/>
    <property type="match status" value="1"/>
</dbReference>
<dbReference type="FunFam" id="3.30.470.30:FF:000001">
    <property type="entry name" value="DNA ligase"/>
    <property type="match status" value="1"/>
</dbReference>
<dbReference type="Gene3D" id="6.20.10.30">
    <property type="match status" value="1"/>
</dbReference>
<dbReference type="Gene3D" id="1.10.150.20">
    <property type="entry name" value="5' to 3' exonuclease, C-terminal subdomain"/>
    <property type="match status" value="2"/>
</dbReference>
<dbReference type="Gene3D" id="3.40.50.10190">
    <property type="entry name" value="BRCT domain"/>
    <property type="match status" value="1"/>
</dbReference>
<dbReference type="Gene3D" id="3.30.470.30">
    <property type="entry name" value="DNA ligase/mRNA capping enzyme"/>
    <property type="match status" value="1"/>
</dbReference>
<dbReference type="Gene3D" id="1.10.287.610">
    <property type="entry name" value="Helix hairpin bin"/>
    <property type="match status" value="1"/>
</dbReference>
<dbReference type="Gene3D" id="2.40.50.140">
    <property type="entry name" value="Nucleic acid-binding proteins"/>
    <property type="match status" value="1"/>
</dbReference>
<dbReference type="HAMAP" id="MF_01588">
    <property type="entry name" value="DNA_ligase_A"/>
    <property type="match status" value="1"/>
</dbReference>
<dbReference type="InterPro" id="IPR001357">
    <property type="entry name" value="BRCT_dom"/>
</dbReference>
<dbReference type="InterPro" id="IPR036420">
    <property type="entry name" value="BRCT_dom_sf"/>
</dbReference>
<dbReference type="InterPro" id="IPR041663">
    <property type="entry name" value="DisA/LigA_HHH"/>
</dbReference>
<dbReference type="InterPro" id="IPR001679">
    <property type="entry name" value="DNA_ligase"/>
</dbReference>
<dbReference type="InterPro" id="IPR018239">
    <property type="entry name" value="DNA_ligase_AS"/>
</dbReference>
<dbReference type="InterPro" id="IPR033136">
    <property type="entry name" value="DNA_ligase_CS"/>
</dbReference>
<dbReference type="InterPro" id="IPR013839">
    <property type="entry name" value="DNAligase_adenylation"/>
</dbReference>
<dbReference type="InterPro" id="IPR013840">
    <property type="entry name" value="DNAligase_N"/>
</dbReference>
<dbReference type="InterPro" id="IPR003583">
    <property type="entry name" value="Hlx-hairpin-Hlx_DNA-bd_motif"/>
</dbReference>
<dbReference type="InterPro" id="IPR012340">
    <property type="entry name" value="NA-bd_OB-fold"/>
</dbReference>
<dbReference type="InterPro" id="IPR004150">
    <property type="entry name" value="NAD_DNA_ligase_OB"/>
</dbReference>
<dbReference type="InterPro" id="IPR010994">
    <property type="entry name" value="RuvA_2-like"/>
</dbReference>
<dbReference type="InterPro" id="IPR004149">
    <property type="entry name" value="Znf_DNAligase_C4"/>
</dbReference>
<dbReference type="NCBIfam" id="TIGR00575">
    <property type="entry name" value="dnlj"/>
    <property type="match status" value="1"/>
</dbReference>
<dbReference type="NCBIfam" id="NF005932">
    <property type="entry name" value="PRK07956.1"/>
    <property type="match status" value="1"/>
</dbReference>
<dbReference type="PANTHER" id="PTHR23389">
    <property type="entry name" value="CHROMOSOME TRANSMISSION FIDELITY FACTOR 18"/>
    <property type="match status" value="1"/>
</dbReference>
<dbReference type="PANTHER" id="PTHR23389:SF9">
    <property type="entry name" value="DNA LIGASE"/>
    <property type="match status" value="1"/>
</dbReference>
<dbReference type="Pfam" id="PF00533">
    <property type="entry name" value="BRCT"/>
    <property type="match status" value="1"/>
</dbReference>
<dbReference type="Pfam" id="PF01653">
    <property type="entry name" value="DNA_ligase_aden"/>
    <property type="match status" value="1"/>
</dbReference>
<dbReference type="Pfam" id="PF03120">
    <property type="entry name" value="DNA_ligase_OB"/>
    <property type="match status" value="1"/>
</dbReference>
<dbReference type="Pfam" id="PF03119">
    <property type="entry name" value="DNA_ligase_ZBD"/>
    <property type="match status" value="1"/>
</dbReference>
<dbReference type="Pfam" id="PF12826">
    <property type="entry name" value="HHH_2"/>
    <property type="match status" value="1"/>
</dbReference>
<dbReference type="Pfam" id="PF14520">
    <property type="entry name" value="HHH_5"/>
    <property type="match status" value="1"/>
</dbReference>
<dbReference type="PIRSF" id="PIRSF001604">
    <property type="entry name" value="LigA"/>
    <property type="match status" value="1"/>
</dbReference>
<dbReference type="SMART" id="SM00292">
    <property type="entry name" value="BRCT"/>
    <property type="match status" value="1"/>
</dbReference>
<dbReference type="SMART" id="SM00278">
    <property type="entry name" value="HhH1"/>
    <property type="match status" value="4"/>
</dbReference>
<dbReference type="SMART" id="SM00532">
    <property type="entry name" value="LIGANc"/>
    <property type="match status" value="1"/>
</dbReference>
<dbReference type="SUPFAM" id="SSF52113">
    <property type="entry name" value="BRCT domain"/>
    <property type="match status" value="1"/>
</dbReference>
<dbReference type="SUPFAM" id="SSF56091">
    <property type="entry name" value="DNA ligase/mRNA capping enzyme, catalytic domain"/>
    <property type="match status" value="1"/>
</dbReference>
<dbReference type="SUPFAM" id="SSF50249">
    <property type="entry name" value="Nucleic acid-binding proteins"/>
    <property type="match status" value="1"/>
</dbReference>
<dbReference type="SUPFAM" id="SSF47781">
    <property type="entry name" value="RuvA domain 2-like"/>
    <property type="match status" value="1"/>
</dbReference>
<dbReference type="PROSITE" id="PS50172">
    <property type="entry name" value="BRCT"/>
    <property type="match status" value="1"/>
</dbReference>
<dbReference type="PROSITE" id="PS01055">
    <property type="entry name" value="DNA_LIGASE_N1"/>
    <property type="match status" value="1"/>
</dbReference>
<dbReference type="PROSITE" id="PS01056">
    <property type="entry name" value="DNA_LIGASE_N2"/>
    <property type="match status" value="1"/>
</dbReference>
<sequence>MSNVEKKISQLQQQLNQYNHEYYVLDQPSVPDAEYDRLMTALIDLEKTNPELKTIDSPSQKVGGQALKSFTQVTHQLPMLSLDNVFSLDDFHAFVKRVKDRLNDNQAIVFCAEPKLDGLAVSLRYEHGQLIQAATRGDGSVGENITTNIRTIKSIPLKLMGTPGKDFPDIVEVRGEVFMPKASFDALNTLAKKRGEKGFANPRNAAAGSLRQLDSKITAKRNLAFYAYSLGFVGKLSDGGAESTDLTNDFFANSHHERLCQLKRLGLPMCPEVRLLESEQACDAFYQDILAKRSALSYEIDGTVLKVDEISLQKRLGFVARAPRWAIAYKFPAEEELTCVEDVEFQVGRTGAITPVARLKPVFVGGVTVSNATLHNQDEITRLGLKVNDFVVIRRAGDVIPQIVSVVLDKRPDNAVDIVFPTSCPVCDSAVAKPEGEAVLRCTAGLFCAAQRKEAIKHFASRKAHDVDGLGDKLVEQLVDEKLINTPADLFKLTEIQVSTIDRMGKKSATNLINGLEQAKSTTLAKFIYGLGIREVGEATAANLANHFYTLAAIESASLEDLQNVSDVGEVVAKNIINFFKEEHNLAIVSGLSEVMHWPTIEIKSAEELPLAEQIFVLTGTLTQMGRTEAKTALQSLGAKVSGSVSKNTHFVVAGDKAGSKLTKAQDLGISVLTEDGLVALLAEHGITI</sequence>
<comment type="function">
    <text evidence="1">DNA ligase that catalyzes the formation of phosphodiester linkages between 5'-phosphoryl and 3'-hydroxyl groups in double-stranded DNA using NAD as a coenzyme and as the energy source for the reaction. It is essential for DNA replication and repair of damaged DNA.</text>
</comment>
<comment type="catalytic activity">
    <reaction evidence="1">
        <text>NAD(+) + (deoxyribonucleotide)n-3'-hydroxyl + 5'-phospho-(deoxyribonucleotide)m = (deoxyribonucleotide)n+m + AMP + beta-nicotinamide D-nucleotide.</text>
        <dbReference type="EC" id="6.5.1.2"/>
    </reaction>
</comment>
<comment type="cofactor">
    <cofactor evidence="1">
        <name>Mg(2+)</name>
        <dbReference type="ChEBI" id="CHEBI:18420"/>
    </cofactor>
    <cofactor evidence="1">
        <name>Mn(2+)</name>
        <dbReference type="ChEBI" id="CHEBI:29035"/>
    </cofactor>
</comment>
<comment type="similarity">
    <text evidence="1">Belongs to the NAD-dependent DNA ligase family. LigA subfamily.</text>
</comment>
<protein>
    <recommendedName>
        <fullName evidence="1">DNA ligase</fullName>
        <ecNumber evidence="1">6.5.1.2</ecNumber>
    </recommendedName>
    <alternativeName>
        <fullName evidence="1">Polydeoxyribonucleotide synthase [NAD(+)]</fullName>
    </alternativeName>
</protein>
<name>DNLJ_COLP3</name>
<reference key="1">
    <citation type="journal article" date="2005" name="Proc. Natl. Acad. Sci. U.S.A.">
        <title>The psychrophilic lifestyle as revealed by the genome sequence of Colwellia psychrerythraea 34H through genomic and proteomic analyses.</title>
        <authorList>
            <person name="Methe B.A."/>
            <person name="Nelson K.E."/>
            <person name="Deming J.W."/>
            <person name="Momen B."/>
            <person name="Melamud E."/>
            <person name="Zhang X."/>
            <person name="Moult J."/>
            <person name="Madupu R."/>
            <person name="Nelson W.C."/>
            <person name="Dodson R.J."/>
            <person name="Brinkac L.M."/>
            <person name="Daugherty S.C."/>
            <person name="Durkin A.S."/>
            <person name="DeBoy R.T."/>
            <person name="Kolonay J.F."/>
            <person name="Sullivan S.A."/>
            <person name="Zhou L."/>
            <person name="Davidsen T.M."/>
            <person name="Wu M."/>
            <person name="Huston A.L."/>
            <person name="Lewis M."/>
            <person name="Weaver B."/>
            <person name="Weidman J.F."/>
            <person name="Khouri H."/>
            <person name="Utterback T.R."/>
            <person name="Feldblyum T.V."/>
            <person name="Fraser C.M."/>
        </authorList>
    </citation>
    <scope>NUCLEOTIDE SEQUENCE [LARGE SCALE GENOMIC DNA]</scope>
    <source>
        <strain>34H / ATCC BAA-681</strain>
    </source>
</reference>
<gene>
    <name evidence="1" type="primary">ligA</name>
    <name type="ordered locus">CPS_3466</name>
</gene>
<feature type="chain" id="PRO_0000313204" description="DNA ligase">
    <location>
        <begin position="1"/>
        <end position="689"/>
    </location>
</feature>
<feature type="domain" description="BRCT" evidence="1">
    <location>
        <begin position="606"/>
        <end position="689"/>
    </location>
</feature>
<feature type="active site" description="N6-AMP-lysine intermediate" evidence="1">
    <location>
        <position position="115"/>
    </location>
</feature>
<feature type="binding site" evidence="1">
    <location>
        <begin position="32"/>
        <end position="36"/>
    </location>
    <ligand>
        <name>NAD(+)</name>
        <dbReference type="ChEBI" id="CHEBI:57540"/>
    </ligand>
</feature>
<feature type="binding site" evidence="1">
    <location>
        <begin position="81"/>
        <end position="82"/>
    </location>
    <ligand>
        <name>NAD(+)</name>
        <dbReference type="ChEBI" id="CHEBI:57540"/>
    </ligand>
</feature>
<feature type="binding site" evidence="1">
    <location>
        <position position="113"/>
    </location>
    <ligand>
        <name>NAD(+)</name>
        <dbReference type="ChEBI" id="CHEBI:57540"/>
    </ligand>
</feature>
<feature type="binding site" evidence="1">
    <location>
        <position position="136"/>
    </location>
    <ligand>
        <name>NAD(+)</name>
        <dbReference type="ChEBI" id="CHEBI:57540"/>
    </ligand>
</feature>
<feature type="binding site" evidence="1">
    <location>
        <position position="176"/>
    </location>
    <ligand>
        <name>NAD(+)</name>
        <dbReference type="ChEBI" id="CHEBI:57540"/>
    </ligand>
</feature>
<feature type="binding site" evidence="1">
    <location>
        <position position="306"/>
    </location>
    <ligand>
        <name>NAD(+)</name>
        <dbReference type="ChEBI" id="CHEBI:57540"/>
    </ligand>
</feature>
<feature type="binding site" evidence="1">
    <location>
        <position position="330"/>
    </location>
    <ligand>
        <name>NAD(+)</name>
        <dbReference type="ChEBI" id="CHEBI:57540"/>
    </ligand>
</feature>
<feature type="binding site" evidence="1">
    <location>
        <position position="424"/>
    </location>
    <ligand>
        <name>Zn(2+)</name>
        <dbReference type="ChEBI" id="CHEBI:29105"/>
    </ligand>
</feature>
<feature type="binding site" evidence="1">
    <location>
        <position position="427"/>
    </location>
    <ligand>
        <name>Zn(2+)</name>
        <dbReference type="ChEBI" id="CHEBI:29105"/>
    </ligand>
</feature>
<feature type="binding site" evidence="1">
    <location>
        <position position="442"/>
    </location>
    <ligand>
        <name>Zn(2+)</name>
        <dbReference type="ChEBI" id="CHEBI:29105"/>
    </ligand>
</feature>
<feature type="binding site" evidence="1">
    <location>
        <position position="448"/>
    </location>
    <ligand>
        <name>Zn(2+)</name>
        <dbReference type="ChEBI" id="CHEBI:29105"/>
    </ligand>
</feature>
<proteinExistence type="inferred from homology"/>
<accession>Q47YI0</accession>
<organism>
    <name type="scientific">Colwellia psychrerythraea (strain 34H / ATCC BAA-681)</name>
    <name type="common">Vibrio psychroerythus</name>
    <dbReference type="NCBI Taxonomy" id="167879"/>
    <lineage>
        <taxon>Bacteria</taxon>
        <taxon>Pseudomonadati</taxon>
        <taxon>Pseudomonadota</taxon>
        <taxon>Gammaproteobacteria</taxon>
        <taxon>Alteromonadales</taxon>
        <taxon>Colwelliaceae</taxon>
        <taxon>Colwellia</taxon>
    </lineage>
</organism>